<organism>
    <name type="scientific">Salmonella arizonae (strain ATCC BAA-731 / CDC346-86 / RSK2980)</name>
    <dbReference type="NCBI Taxonomy" id="41514"/>
    <lineage>
        <taxon>Bacteria</taxon>
        <taxon>Pseudomonadati</taxon>
        <taxon>Pseudomonadota</taxon>
        <taxon>Gammaproteobacteria</taxon>
        <taxon>Enterobacterales</taxon>
        <taxon>Enterobacteriaceae</taxon>
        <taxon>Salmonella</taxon>
    </lineage>
</organism>
<accession>A9MJF0</accession>
<gene>
    <name evidence="1" type="primary">hutU</name>
    <name type="ordered locus">SARI_02136</name>
</gene>
<keyword id="KW-0963">Cytoplasm</keyword>
<keyword id="KW-0369">Histidine metabolism</keyword>
<keyword id="KW-0456">Lyase</keyword>
<keyword id="KW-0520">NAD</keyword>
<keyword id="KW-1185">Reference proteome</keyword>
<name>HUTU_SALAR</name>
<evidence type="ECO:0000255" key="1">
    <source>
        <dbReference type="HAMAP-Rule" id="MF_00577"/>
    </source>
</evidence>
<sequence length="561" mass="61529">MPESKYRQQTIRAPRGATLTAKSWLTEAPLRMLMNNLDPDVAENPHELVVYGGIGRAARNWECYDAIVDALTRLEADETLLIQSGKPVGVFKTHDNAPRVLIANSNLVPHWATWEHFNELDAKGLAMYGQMTAGSWIYIGSQGIVQGTYETFVEAGRQHYNGTLAGRWVLTAGLGGMGGAQPLAATLAGACSLTIECQQSRIDFRLRTRYVDEQAATLDDALARIAHYTRAGKAVSVALCANAADILPELVNRGVRPDLVTDQTSAHDPLHGYLPTGWRWEEYQEKALSDPQGTMQAAKRSMAAHVQAMLAFSKMGVPTFDYGNNIRQMAKEMGVENAFDFPGFVPAYIRPLFCRGIGPFRWVALSGDPQDIYKTDAKVKEIVAEDKHLHHWLDMARERIHFQGLPARICWVGLEWRQKLGLAFNEMVRCGEVSAPIVIGRDHLDSGSVASPNRETEAMRDGSDAVSDWPLLNALLNTASGATWVSLHHGGGVGMGFSQHAGMVIVCDGTDEAAARIRRVLHNDPATGVMRHADAGYDLAVECAVEQGLHLPMVAATQRKR</sequence>
<feature type="chain" id="PRO_1000082352" description="Urocanate hydratase">
    <location>
        <begin position="1"/>
        <end position="561"/>
    </location>
</feature>
<feature type="active site" evidence="1">
    <location>
        <position position="410"/>
    </location>
</feature>
<feature type="binding site" evidence="1">
    <location>
        <begin position="52"/>
        <end position="53"/>
    </location>
    <ligand>
        <name>NAD(+)</name>
        <dbReference type="ChEBI" id="CHEBI:57540"/>
    </ligand>
</feature>
<feature type="binding site" evidence="1">
    <location>
        <position position="130"/>
    </location>
    <ligand>
        <name>NAD(+)</name>
        <dbReference type="ChEBI" id="CHEBI:57540"/>
    </ligand>
</feature>
<feature type="binding site" evidence="1">
    <location>
        <begin position="176"/>
        <end position="178"/>
    </location>
    <ligand>
        <name>NAD(+)</name>
        <dbReference type="ChEBI" id="CHEBI:57540"/>
    </ligand>
</feature>
<feature type="binding site" evidence="1">
    <location>
        <position position="196"/>
    </location>
    <ligand>
        <name>NAD(+)</name>
        <dbReference type="ChEBI" id="CHEBI:57540"/>
    </ligand>
</feature>
<feature type="binding site" evidence="1">
    <location>
        <position position="201"/>
    </location>
    <ligand>
        <name>NAD(+)</name>
        <dbReference type="ChEBI" id="CHEBI:57540"/>
    </ligand>
</feature>
<feature type="binding site" evidence="1">
    <location>
        <begin position="242"/>
        <end position="243"/>
    </location>
    <ligand>
        <name>NAD(+)</name>
        <dbReference type="ChEBI" id="CHEBI:57540"/>
    </ligand>
</feature>
<feature type="binding site" evidence="1">
    <location>
        <begin position="263"/>
        <end position="267"/>
    </location>
    <ligand>
        <name>NAD(+)</name>
        <dbReference type="ChEBI" id="CHEBI:57540"/>
    </ligand>
</feature>
<feature type="binding site" evidence="1">
    <location>
        <begin position="273"/>
        <end position="274"/>
    </location>
    <ligand>
        <name>NAD(+)</name>
        <dbReference type="ChEBI" id="CHEBI:57540"/>
    </ligand>
</feature>
<feature type="binding site" evidence="1">
    <location>
        <position position="322"/>
    </location>
    <ligand>
        <name>NAD(+)</name>
        <dbReference type="ChEBI" id="CHEBI:57540"/>
    </ligand>
</feature>
<feature type="binding site" evidence="1">
    <location>
        <position position="492"/>
    </location>
    <ligand>
        <name>NAD(+)</name>
        <dbReference type="ChEBI" id="CHEBI:57540"/>
    </ligand>
</feature>
<proteinExistence type="inferred from homology"/>
<comment type="function">
    <text evidence="1">Catalyzes the conversion of urocanate to 4-imidazolone-5-propionate.</text>
</comment>
<comment type="catalytic activity">
    <reaction evidence="1">
        <text>4-imidazolone-5-propanoate = trans-urocanate + H2O</text>
        <dbReference type="Rhea" id="RHEA:13101"/>
        <dbReference type="ChEBI" id="CHEBI:15377"/>
        <dbReference type="ChEBI" id="CHEBI:17771"/>
        <dbReference type="ChEBI" id="CHEBI:77893"/>
        <dbReference type="EC" id="4.2.1.49"/>
    </reaction>
</comment>
<comment type="cofactor">
    <cofactor evidence="1">
        <name>NAD(+)</name>
        <dbReference type="ChEBI" id="CHEBI:57540"/>
    </cofactor>
    <text evidence="1">Binds 1 NAD(+) per subunit.</text>
</comment>
<comment type="pathway">
    <text evidence="1">Amino-acid degradation; L-histidine degradation into L-glutamate; N-formimidoyl-L-glutamate from L-histidine: step 2/3.</text>
</comment>
<comment type="subcellular location">
    <subcellularLocation>
        <location evidence="1">Cytoplasm</location>
    </subcellularLocation>
</comment>
<comment type="similarity">
    <text evidence="1">Belongs to the urocanase family.</text>
</comment>
<protein>
    <recommendedName>
        <fullName evidence="1">Urocanate hydratase</fullName>
        <shortName evidence="1">Urocanase</shortName>
        <ecNumber evidence="1">4.2.1.49</ecNumber>
    </recommendedName>
    <alternativeName>
        <fullName evidence="1">Imidazolonepropionate hydrolase</fullName>
    </alternativeName>
</protein>
<reference key="1">
    <citation type="submission" date="2007-11" db="EMBL/GenBank/DDBJ databases">
        <authorList>
            <consortium name="The Salmonella enterica serovar Arizonae Genome Sequencing Project"/>
            <person name="McClelland M."/>
            <person name="Sanderson E.K."/>
            <person name="Porwollik S."/>
            <person name="Spieth J."/>
            <person name="Clifton W.S."/>
            <person name="Fulton R."/>
            <person name="Chunyan W."/>
            <person name="Wollam A."/>
            <person name="Shah N."/>
            <person name="Pepin K."/>
            <person name="Bhonagiri V."/>
            <person name="Nash W."/>
            <person name="Johnson M."/>
            <person name="Thiruvilangam P."/>
            <person name="Wilson R."/>
        </authorList>
    </citation>
    <scope>NUCLEOTIDE SEQUENCE [LARGE SCALE GENOMIC DNA]</scope>
    <source>
        <strain>ATCC BAA-731 / CDC346-86 / RSK2980</strain>
    </source>
</reference>
<dbReference type="EC" id="4.2.1.49" evidence="1"/>
<dbReference type="EMBL" id="CP000880">
    <property type="protein sequence ID" value="ABX22013.1"/>
    <property type="molecule type" value="Genomic_DNA"/>
</dbReference>
<dbReference type="SMR" id="A9MJF0"/>
<dbReference type="STRING" id="41514.SARI_02136"/>
<dbReference type="KEGG" id="ses:SARI_02136"/>
<dbReference type="HOGENOM" id="CLU_018868_0_1_6"/>
<dbReference type="UniPathway" id="UPA00379">
    <property type="reaction ID" value="UER00550"/>
</dbReference>
<dbReference type="Proteomes" id="UP000002084">
    <property type="component" value="Chromosome"/>
</dbReference>
<dbReference type="GO" id="GO:0005737">
    <property type="term" value="C:cytoplasm"/>
    <property type="evidence" value="ECO:0007669"/>
    <property type="project" value="UniProtKB-SubCell"/>
</dbReference>
<dbReference type="GO" id="GO:0016153">
    <property type="term" value="F:urocanate hydratase activity"/>
    <property type="evidence" value="ECO:0007669"/>
    <property type="project" value="UniProtKB-UniRule"/>
</dbReference>
<dbReference type="GO" id="GO:0019556">
    <property type="term" value="P:L-histidine catabolic process to glutamate and formamide"/>
    <property type="evidence" value="ECO:0007669"/>
    <property type="project" value="UniProtKB-UniPathway"/>
</dbReference>
<dbReference type="GO" id="GO:0019557">
    <property type="term" value="P:L-histidine catabolic process to glutamate and formate"/>
    <property type="evidence" value="ECO:0007669"/>
    <property type="project" value="UniProtKB-UniPathway"/>
</dbReference>
<dbReference type="FunFam" id="3.40.50.10730:FF:000001">
    <property type="entry name" value="Urocanate hydratase"/>
    <property type="match status" value="1"/>
</dbReference>
<dbReference type="Gene3D" id="3.40.50.10730">
    <property type="entry name" value="Urocanase like domains"/>
    <property type="match status" value="1"/>
</dbReference>
<dbReference type="Gene3D" id="3.40.1770.10">
    <property type="entry name" value="Urocanase superfamily"/>
    <property type="match status" value="1"/>
</dbReference>
<dbReference type="HAMAP" id="MF_00577">
    <property type="entry name" value="HutU"/>
    <property type="match status" value="1"/>
</dbReference>
<dbReference type="InterPro" id="IPR055351">
    <property type="entry name" value="Urocanase"/>
</dbReference>
<dbReference type="InterPro" id="IPR023637">
    <property type="entry name" value="Urocanase-like"/>
</dbReference>
<dbReference type="InterPro" id="IPR035401">
    <property type="entry name" value="Urocanase_C"/>
</dbReference>
<dbReference type="InterPro" id="IPR038364">
    <property type="entry name" value="Urocanase_central_sf"/>
</dbReference>
<dbReference type="InterPro" id="IPR023636">
    <property type="entry name" value="Urocanase_CS"/>
</dbReference>
<dbReference type="InterPro" id="IPR035400">
    <property type="entry name" value="Urocanase_N"/>
</dbReference>
<dbReference type="InterPro" id="IPR035085">
    <property type="entry name" value="Urocanase_Rossmann-like"/>
</dbReference>
<dbReference type="InterPro" id="IPR036190">
    <property type="entry name" value="Urocanase_sf"/>
</dbReference>
<dbReference type="NCBIfam" id="TIGR01228">
    <property type="entry name" value="hutU"/>
    <property type="match status" value="1"/>
</dbReference>
<dbReference type="NCBIfam" id="NF003820">
    <property type="entry name" value="PRK05414.1"/>
    <property type="match status" value="1"/>
</dbReference>
<dbReference type="PANTHER" id="PTHR12216">
    <property type="entry name" value="UROCANATE HYDRATASE"/>
    <property type="match status" value="1"/>
</dbReference>
<dbReference type="PANTHER" id="PTHR12216:SF4">
    <property type="entry name" value="UROCANATE HYDRATASE"/>
    <property type="match status" value="1"/>
</dbReference>
<dbReference type="Pfam" id="PF01175">
    <property type="entry name" value="Urocanase"/>
    <property type="match status" value="1"/>
</dbReference>
<dbReference type="Pfam" id="PF17392">
    <property type="entry name" value="Urocanase_C"/>
    <property type="match status" value="1"/>
</dbReference>
<dbReference type="Pfam" id="PF17391">
    <property type="entry name" value="Urocanase_N"/>
    <property type="match status" value="1"/>
</dbReference>
<dbReference type="PIRSF" id="PIRSF001423">
    <property type="entry name" value="Urocanate_hydrat"/>
    <property type="match status" value="1"/>
</dbReference>
<dbReference type="SUPFAM" id="SSF111326">
    <property type="entry name" value="Urocanase"/>
    <property type="match status" value="1"/>
</dbReference>
<dbReference type="PROSITE" id="PS01233">
    <property type="entry name" value="UROCANASE"/>
    <property type="match status" value="1"/>
</dbReference>